<keyword id="KW-0049">Antioxidant</keyword>
<keyword id="KW-0963">Cytoplasm</keyword>
<keyword id="KW-1015">Disulfide bond</keyword>
<keyword id="KW-0560">Oxidoreductase</keyword>
<keyword id="KW-0575">Peroxidase</keyword>
<keyword id="KW-0676">Redox-active center</keyword>
<keyword id="KW-1185">Reference proteome</keyword>
<name>TDXH_CHLTE</name>
<accession>Q8KBN8</accession>
<protein>
    <recommendedName>
        <fullName evidence="1">Peroxiredoxin</fullName>
        <ecNumber evidence="1">1.11.1.24</ecNumber>
    </recommendedName>
    <alternativeName>
        <fullName evidence="1">Thioredoxin peroxidase</fullName>
    </alternativeName>
    <alternativeName>
        <fullName evidence="1">Thioredoxin-dependent peroxiredoxin</fullName>
    </alternativeName>
</protein>
<proteinExistence type="inferred from homology"/>
<organism>
    <name type="scientific">Chlorobaculum tepidum (strain ATCC 49652 / DSM 12025 / NBRC 103806 / TLS)</name>
    <name type="common">Chlorobium tepidum</name>
    <dbReference type="NCBI Taxonomy" id="194439"/>
    <lineage>
        <taxon>Bacteria</taxon>
        <taxon>Pseudomonadati</taxon>
        <taxon>Chlorobiota</taxon>
        <taxon>Chlorobiia</taxon>
        <taxon>Chlorobiales</taxon>
        <taxon>Chlorobiaceae</taxon>
        <taxon>Chlorobaculum</taxon>
    </lineage>
</organism>
<dbReference type="EC" id="1.11.1.24" evidence="1"/>
<dbReference type="EMBL" id="AE006470">
    <property type="protein sequence ID" value="AAM72969.1"/>
    <property type="molecule type" value="Genomic_DNA"/>
</dbReference>
<dbReference type="RefSeq" id="NP_662627.2">
    <property type="nucleotide sequence ID" value="NC_002932.3"/>
</dbReference>
<dbReference type="SMR" id="Q8KBN8"/>
<dbReference type="STRING" id="194439.CT1747"/>
<dbReference type="EnsemblBacteria" id="AAM72969">
    <property type="protein sequence ID" value="AAM72969"/>
    <property type="gene ID" value="CT1747"/>
</dbReference>
<dbReference type="KEGG" id="cte:CT1747"/>
<dbReference type="PATRIC" id="fig|194439.7.peg.1582"/>
<dbReference type="eggNOG" id="COG0450">
    <property type="taxonomic scope" value="Bacteria"/>
</dbReference>
<dbReference type="HOGENOM" id="CLU_042529_4_4_10"/>
<dbReference type="OrthoDB" id="9812811at2"/>
<dbReference type="Proteomes" id="UP000001007">
    <property type="component" value="Chromosome"/>
</dbReference>
<dbReference type="GO" id="GO:0005829">
    <property type="term" value="C:cytosol"/>
    <property type="evidence" value="ECO:0007669"/>
    <property type="project" value="TreeGrafter"/>
</dbReference>
<dbReference type="GO" id="GO:0008379">
    <property type="term" value="F:thioredoxin peroxidase activity"/>
    <property type="evidence" value="ECO:0007669"/>
    <property type="project" value="TreeGrafter"/>
</dbReference>
<dbReference type="GO" id="GO:0045454">
    <property type="term" value="P:cell redox homeostasis"/>
    <property type="evidence" value="ECO:0007669"/>
    <property type="project" value="TreeGrafter"/>
</dbReference>
<dbReference type="GO" id="GO:0033554">
    <property type="term" value="P:cellular response to stress"/>
    <property type="evidence" value="ECO:0007669"/>
    <property type="project" value="TreeGrafter"/>
</dbReference>
<dbReference type="GO" id="GO:0042744">
    <property type="term" value="P:hydrogen peroxide catabolic process"/>
    <property type="evidence" value="ECO:0007669"/>
    <property type="project" value="TreeGrafter"/>
</dbReference>
<dbReference type="GO" id="GO:0006979">
    <property type="term" value="P:response to oxidative stress"/>
    <property type="evidence" value="ECO:0007669"/>
    <property type="project" value="TreeGrafter"/>
</dbReference>
<dbReference type="CDD" id="cd03016">
    <property type="entry name" value="PRX_1cys"/>
    <property type="match status" value="1"/>
</dbReference>
<dbReference type="FunFam" id="3.30.1020.10:FF:000002">
    <property type="entry name" value="Peroxiredoxin"/>
    <property type="match status" value="1"/>
</dbReference>
<dbReference type="FunFam" id="3.40.30.10:FF:000011">
    <property type="entry name" value="Peroxiredoxin PRX1"/>
    <property type="match status" value="1"/>
</dbReference>
<dbReference type="Gene3D" id="3.30.1020.10">
    <property type="entry name" value="Antioxidant, Horf6, Chain A, domain2"/>
    <property type="match status" value="1"/>
</dbReference>
<dbReference type="Gene3D" id="3.40.30.10">
    <property type="entry name" value="Glutaredoxin"/>
    <property type="match status" value="1"/>
</dbReference>
<dbReference type="HAMAP" id="MF_00401">
    <property type="entry name" value="Peroxiredoxin"/>
    <property type="match status" value="1"/>
</dbReference>
<dbReference type="InterPro" id="IPR000866">
    <property type="entry name" value="AhpC/TSA"/>
</dbReference>
<dbReference type="InterPro" id="IPR050217">
    <property type="entry name" value="Peroxiredoxin"/>
</dbReference>
<dbReference type="InterPro" id="IPR024706">
    <property type="entry name" value="Peroxiredoxin_AhpC-typ"/>
</dbReference>
<dbReference type="InterPro" id="IPR019479">
    <property type="entry name" value="Peroxiredoxin_C"/>
</dbReference>
<dbReference type="InterPro" id="IPR022915">
    <property type="entry name" value="Peroxiredoxin_TDXH"/>
</dbReference>
<dbReference type="InterPro" id="IPR045020">
    <property type="entry name" value="PRX_1cys"/>
</dbReference>
<dbReference type="InterPro" id="IPR036249">
    <property type="entry name" value="Thioredoxin-like_sf"/>
</dbReference>
<dbReference type="InterPro" id="IPR013766">
    <property type="entry name" value="Thioredoxin_domain"/>
</dbReference>
<dbReference type="NCBIfam" id="NF009668">
    <property type="entry name" value="PRK13189.1"/>
    <property type="match status" value="1"/>
</dbReference>
<dbReference type="PANTHER" id="PTHR10681">
    <property type="entry name" value="THIOREDOXIN PEROXIDASE"/>
    <property type="match status" value="1"/>
</dbReference>
<dbReference type="PANTHER" id="PTHR10681:SF128">
    <property type="entry name" value="THIOREDOXIN-DEPENDENT PEROXIDE REDUCTASE, MITOCHONDRIAL"/>
    <property type="match status" value="1"/>
</dbReference>
<dbReference type="Pfam" id="PF10417">
    <property type="entry name" value="1-cysPrx_C"/>
    <property type="match status" value="1"/>
</dbReference>
<dbReference type="Pfam" id="PF00578">
    <property type="entry name" value="AhpC-TSA"/>
    <property type="match status" value="1"/>
</dbReference>
<dbReference type="PIRSF" id="PIRSF000239">
    <property type="entry name" value="AHPC"/>
    <property type="match status" value="1"/>
</dbReference>
<dbReference type="SUPFAM" id="SSF52833">
    <property type="entry name" value="Thioredoxin-like"/>
    <property type="match status" value="1"/>
</dbReference>
<dbReference type="PROSITE" id="PS51352">
    <property type="entry name" value="THIOREDOXIN_2"/>
    <property type="match status" value="1"/>
</dbReference>
<reference key="1">
    <citation type="journal article" date="2002" name="Proc. Natl. Acad. Sci. U.S.A.">
        <title>The complete genome sequence of Chlorobium tepidum TLS, a photosynthetic, anaerobic, green-sulfur bacterium.</title>
        <authorList>
            <person name="Eisen J.A."/>
            <person name="Nelson K.E."/>
            <person name="Paulsen I.T."/>
            <person name="Heidelberg J.F."/>
            <person name="Wu M."/>
            <person name="Dodson R.J."/>
            <person name="DeBoy R.T."/>
            <person name="Gwinn M.L."/>
            <person name="Nelson W.C."/>
            <person name="Haft D.H."/>
            <person name="Hickey E.K."/>
            <person name="Peterson J.D."/>
            <person name="Durkin A.S."/>
            <person name="Kolonay J.F."/>
            <person name="Yang F."/>
            <person name="Holt I.E."/>
            <person name="Umayam L.A."/>
            <person name="Mason T.M."/>
            <person name="Brenner M."/>
            <person name="Shea T.P."/>
            <person name="Parksey D.S."/>
            <person name="Nierman W.C."/>
            <person name="Feldblyum T.V."/>
            <person name="Hansen C.L."/>
            <person name="Craven M.B."/>
            <person name="Radune D."/>
            <person name="Vamathevan J.J."/>
            <person name="Khouri H.M."/>
            <person name="White O."/>
            <person name="Gruber T.M."/>
            <person name="Ketchum K.A."/>
            <person name="Venter J.C."/>
            <person name="Tettelin H."/>
            <person name="Bryant D.A."/>
            <person name="Fraser C.M."/>
        </authorList>
    </citation>
    <scope>NUCLEOTIDE SEQUENCE [LARGE SCALE GENOMIC DNA]</scope>
    <source>
        <strain>ATCC 49652 / DSM 12025 / NBRC 103806 / TLS</strain>
    </source>
</reference>
<evidence type="ECO:0000255" key="1">
    <source>
        <dbReference type="HAMAP-Rule" id="MF_00401"/>
    </source>
</evidence>
<sequence>MPLLGDDFPELKVQTTHGPMNIPGDLKGSWFVLFSHPADFTPVCTTEFVAFQQRVEAFEKIGCKLIGMSVDQVFSHIKWVEWIKENLDVDITFPIVAANDRIANKLGMLHPGKGTNTVRAVFVGDPNGKVRLVLYYPQEIGRNMDEILRAVKVLQISDSNKVAMPADWPNNLLIKDHVIIPPANNVEDAKKRKEQQYDCYDWWFCHKPLDK</sequence>
<feature type="chain" id="PRO_0000135176" description="Peroxiredoxin">
    <location>
        <begin position="1"/>
        <end position="211"/>
    </location>
</feature>
<feature type="domain" description="Thioredoxin" evidence="1">
    <location>
        <begin position="2"/>
        <end position="156"/>
    </location>
</feature>
<feature type="active site" description="Cysteine sulfenic acid (-SOH) intermediate" evidence="1">
    <location>
        <position position="44"/>
    </location>
</feature>
<feature type="binding site" evidence="1">
    <location>
        <position position="119"/>
    </location>
    <ligand>
        <name>substrate</name>
    </ligand>
</feature>
<feature type="disulfide bond" description="Interchain (with C-205); in linked form" evidence="1">
    <location>
        <position position="44"/>
    </location>
</feature>
<feature type="disulfide bond" description="Alternate" evidence="1">
    <location>
        <begin position="199"/>
        <end position="205"/>
    </location>
</feature>
<feature type="disulfide bond" description="Interchain (with C-44); in linked form" evidence="1">
    <location>
        <position position="205"/>
    </location>
</feature>
<comment type="function">
    <text evidence="1">Thiol-specific peroxidase that catalyzes the reduction of hydrogen peroxide and organic hydroperoxides to water and alcohols, respectively. Plays a role in cell protection against oxidative stress by detoxifying peroxides.</text>
</comment>
<comment type="catalytic activity">
    <reaction evidence="1">
        <text>a hydroperoxide + [thioredoxin]-dithiol = an alcohol + [thioredoxin]-disulfide + H2O</text>
        <dbReference type="Rhea" id="RHEA:62620"/>
        <dbReference type="Rhea" id="RHEA-COMP:10698"/>
        <dbReference type="Rhea" id="RHEA-COMP:10700"/>
        <dbReference type="ChEBI" id="CHEBI:15377"/>
        <dbReference type="ChEBI" id="CHEBI:29950"/>
        <dbReference type="ChEBI" id="CHEBI:30879"/>
        <dbReference type="ChEBI" id="CHEBI:35924"/>
        <dbReference type="ChEBI" id="CHEBI:50058"/>
        <dbReference type="EC" id="1.11.1.24"/>
    </reaction>
</comment>
<comment type="subunit">
    <text evidence="1">Homodecamer. Pentamer of dimers that assemble into a ring structure.</text>
</comment>
<comment type="subcellular location">
    <subcellularLocation>
        <location evidence="1">Cytoplasm</location>
    </subcellularLocation>
</comment>
<comment type="miscellaneous">
    <text evidence="1">The active site is a conserved redox-active cysteine residue, the peroxidatic cysteine (C(P)), which makes the nucleophilic attack on the peroxide substrate. The peroxide oxidizes the C(P)-SH to cysteine sulfenic acid (C(P)-SOH), which then reacts with another cysteine residue, the resolving cysteine (C(R)), to form a disulfide bridge. The disulfide is subsequently reduced by an appropriate electron donor to complete the catalytic cycle. Although the primary sequence of this enzyme is similar to those of the 1-Cys Prx6 enzymes, its catalytic properties resemble those of the typical 2-Cys Prxs and C(R) is provided by the other dimeric subunit to form an intersubunit disulfide. The disulfide is subsequently reduced by thioredoxin.</text>
</comment>
<comment type="similarity">
    <text evidence="1">Belongs to the peroxiredoxin family. Prx6 subfamily.</text>
</comment>
<gene>
    <name type="ordered locus">CT1747</name>
</gene>